<organism>
    <name type="scientific">Acanthamoeba polyphaga mimivirus</name>
    <name type="common">APMV</name>
    <dbReference type="NCBI Taxonomy" id="212035"/>
    <lineage>
        <taxon>Viruses</taxon>
        <taxon>Varidnaviria</taxon>
        <taxon>Bamfordvirae</taxon>
        <taxon>Nucleocytoviricota</taxon>
        <taxon>Megaviricetes</taxon>
        <taxon>Imitervirales</taxon>
        <taxon>Mimiviridae</taxon>
        <taxon>Megamimivirinae</taxon>
        <taxon>Mimivirus</taxon>
        <taxon>Mimivirus bradfordmassiliense</taxon>
    </lineage>
</organism>
<proteinExistence type="predicted"/>
<name>YR664_MIMIV</name>
<protein>
    <recommendedName>
        <fullName>Putative ankyrin repeat protein R664</fullName>
    </recommendedName>
</protein>
<sequence length="162" mass="18664">MDQTQYILNKKLVEFLLYSNQDCSLIVIDALITIGANVNYIDETNYNDTPILSVITKTSESNPETVKLLLDKGADVNYQNKYHETALMRTIKYGNFGIAKILLDYGANPYLLDYKNRNSIMIAKEFNVIPMLNIINLYDKKNKDNSDKIRLEIDRIVNIFVD</sequence>
<keyword id="KW-0040">ANK repeat</keyword>
<keyword id="KW-1185">Reference proteome</keyword>
<keyword id="KW-0677">Repeat</keyword>
<accession>Q5UQ58</accession>
<gene>
    <name type="ordered locus">MIMI_R664</name>
</gene>
<reference key="1">
    <citation type="journal article" date="2004" name="Science">
        <title>The 1.2-megabase genome sequence of Mimivirus.</title>
        <authorList>
            <person name="Raoult D."/>
            <person name="Audic S."/>
            <person name="Robert C."/>
            <person name="Abergel C."/>
            <person name="Renesto P."/>
            <person name="Ogata H."/>
            <person name="La Scola B."/>
            <person name="Susan M."/>
            <person name="Claverie J.-M."/>
        </authorList>
    </citation>
    <scope>NUCLEOTIDE SEQUENCE [LARGE SCALE GENOMIC DNA]</scope>
    <source>
        <strain>Rowbotham-Bradford</strain>
    </source>
</reference>
<feature type="chain" id="PRO_0000067184" description="Putative ankyrin repeat protein R664">
    <location>
        <begin position="1"/>
        <end position="162"/>
    </location>
</feature>
<feature type="repeat" description="ANK 1">
    <location>
        <begin position="10"/>
        <end position="40"/>
    </location>
</feature>
<feature type="repeat" description="ANK 2">
    <location>
        <begin position="47"/>
        <end position="78"/>
    </location>
</feature>
<feature type="repeat" description="ANK 3">
    <location>
        <begin position="82"/>
        <end position="111"/>
    </location>
</feature>
<dbReference type="EMBL" id="AY653733">
    <property type="protein sequence ID" value="AAV50925.1"/>
    <property type="molecule type" value="Genomic_DNA"/>
</dbReference>
<dbReference type="SMR" id="Q5UQ58"/>
<dbReference type="KEGG" id="vg:9925310"/>
<dbReference type="OrthoDB" id="2010at10239"/>
<dbReference type="Proteomes" id="UP000001134">
    <property type="component" value="Genome"/>
</dbReference>
<dbReference type="Gene3D" id="1.25.40.20">
    <property type="entry name" value="Ankyrin repeat-containing domain"/>
    <property type="match status" value="1"/>
</dbReference>
<dbReference type="InterPro" id="IPR002110">
    <property type="entry name" value="Ankyrin_rpt"/>
</dbReference>
<dbReference type="InterPro" id="IPR036770">
    <property type="entry name" value="Ankyrin_rpt-contain_sf"/>
</dbReference>
<dbReference type="PANTHER" id="PTHR24134:SF9">
    <property type="entry name" value="ANKYRIN REPEAT AND SOCS BOX PROTEIN 8"/>
    <property type="match status" value="1"/>
</dbReference>
<dbReference type="PANTHER" id="PTHR24134">
    <property type="entry name" value="ANKYRIN REPEAT-CONTAINING PROTEIN DDB_G0279043"/>
    <property type="match status" value="1"/>
</dbReference>
<dbReference type="Pfam" id="PF12796">
    <property type="entry name" value="Ank_2"/>
    <property type="match status" value="1"/>
</dbReference>
<dbReference type="SMART" id="SM00248">
    <property type="entry name" value="ANK"/>
    <property type="match status" value="3"/>
</dbReference>
<dbReference type="SUPFAM" id="SSF48403">
    <property type="entry name" value="Ankyrin repeat"/>
    <property type="match status" value="1"/>
</dbReference>
<dbReference type="PROSITE" id="PS50297">
    <property type="entry name" value="ANK_REP_REGION"/>
    <property type="match status" value="1"/>
</dbReference>
<dbReference type="PROSITE" id="PS50088">
    <property type="entry name" value="ANK_REPEAT"/>
    <property type="match status" value="1"/>
</dbReference>
<organismHost>
    <name type="scientific">Acanthamoeba polyphaga</name>
    <name type="common">Amoeba</name>
    <dbReference type="NCBI Taxonomy" id="5757"/>
</organismHost>